<protein>
    <recommendedName>
        <fullName>Developmentally-regulated GTP-binding protein 2</fullName>
        <shortName>DRG-2</shortName>
    </recommendedName>
    <alternativeName>
        <fullName>Translation factor GTPase DRG2</fullName>
        <shortName>TRAFAC GTPase DRG2</shortName>
        <ecNumber>3.6.5.-</ecNumber>
    </alternativeName>
</protein>
<organism>
    <name type="scientific">Bos taurus</name>
    <name type="common">Bovine</name>
    <dbReference type="NCBI Taxonomy" id="9913"/>
    <lineage>
        <taxon>Eukaryota</taxon>
        <taxon>Metazoa</taxon>
        <taxon>Chordata</taxon>
        <taxon>Craniata</taxon>
        <taxon>Vertebrata</taxon>
        <taxon>Euteleostomi</taxon>
        <taxon>Mammalia</taxon>
        <taxon>Eutheria</taxon>
        <taxon>Laurasiatheria</taxon>
        <taxon>Artiodactyla</taxon>
        <taxon>Ruminantia</taxon>
        <taxon>Pecora</taxon>
        <taxon>Bovidae</taxon>
        <taxon>Bovinae</taxon>
        <taxon>Bos</taxon>
    </lineage>
</organism>
<accession>Q58D56</accession>
<comment type="function">
    <text evidence="2">Catalyzes the conversion of GTP to GDP through hydrolysis of the gamma-phosphate bond in GTP. When hydroxylated at C-3 of 'Lys-21' by JMJD7, may bind to RNA and play a role in translation.</text>
</comment>
<comment type="catalytic activity">
    <reaction evidence="2">
        <text>GTP + H2O = GDP + phosphate + H(+)</text>
        <dbReference type="Rhea" id="RHEA:19669"/>
        <dbReference type="ChEBI" id="CHEBI:15377"/>
        <dbReference type="ChEBI" id="CHEBI:15378"/>
        <dbReference type="ChEBI" id="CHEBI:37565"/>
        <dbReference type="ChEBI" id="CHEBI:43474"/>
        <dbReference type="ChEBI" id="CHEBI:58189"/>
    </reaction>
</comment>
<comment type="cofactor">
    <cofactor evidence="2">
        <name>Mg(2+)</name>
        <dbReference type="ChEBI" id="CHEBI:18420"/>
    </cofactor>
</comment>
<comment type="subunit">
    <text evidence="1 2 3">Interacts with RWDD1; this interaction confers protection to polyubiquitination and proteolytic degradation (By similarity). Interacts with JMJD7; this interaction is direct (By similarity).</text>
</comment>
<comment type="subcellular location">
    <subcellularLocation>
        <location evidence="2">Nucleus</location>
    </subcellularLocation>
    <subcellularLocation>
        <location evidence="2">Cytoplasm</location>
    </subcellularLocation>
</comment>
<comment type="PTM">
    <text evidence="3">Polyubiquitinated.</text>
</comment>
<comment type="PTM">
    <text evidence="2">Hydroxylated (with S stereochemistry) at C-3 of Lys-21 by JMJD7.</text>
</comment>
<comment type="similarity">
    <text evidence="4">Belongs to the TRAFAC class OBG-HflX-like GTPase superfamily. OBG GTPase family.</text>
</comment>
<gene>
    <name type="primary">DRG2</name>
</gene>
<keyword id="KW-0963">Cytoplasm</keyword>
<keyword id="KW-0342">GTP-binding</keyword>
<keyword id="KW-0378">Hydrolase</keyword>
<keyword id="KW-0379">Hydroxylation</keyword>
<keyword id="KW-0460">Magnesium</keyword>
<keyword id="KW-0479">Metal-binding</keyword>
<keyword id="KW-0547">Nucleotide-binding</keyword>
<keyword id="KW-0539">Nucleus</keyword>
<keyword id="KW-1185">Reference proteome</keyword>
<keyword id="KW-0832">Ubl conjugation</keyword>
<evidence type="ECO:0000250" key="1"/>
<evidence type="ECO:0000250" key="2">
    <source>
        <dbReference type="UniProtKB" id="P55039"/>
    </source>
</evidence>
<evidence type="ECO:0000250" key="3">
    <source>
        <dbReference type="UniProtKB" id="Q9QXB9"/>
    </source>
</evidence>
<evidence type="ECO:0000255" key="4">
    <source>
        <dbReference type="PROSITE-ProRule" id="PRU01047"/>
    </source>
</evidence>
<evidence type="ECO:0000255" key="5">
    <source>
        <dbReference type="PROSITE-ProRule" id="PRU01228"/>
    </source>
</evidence>
<feature type="chain" id="PRO_0000261588" description="Developmentally-regulated GTP-binding protein 2">
    <location>
        <begin position="1"/>
        <end position="364"/>
    </location>
</feature>
<feature type="domain" description="OBG-type G" evidence="4">
    <location>
        <begin position="63"/>
        <end position="288"/>
    </location>
</feature>
<feature type="domain" description="TGS" evidence="5">
    <location>
        <begin position="288"/>
        <end position="363"/>
    </location>
</feature>
<feature type="binding site" evidence="4">
    <location>
        <begin position="69"/>
        <end position="76"/>
    </location>
    <ligand>
        <name>GTP</name>
        <dbReference type="ChEBI" id="CHEBI:37565"/>
    </ligand>
</feature>
<feature type="binding site" evidence="4">
    <location>
        <position position="76"/>
    </location>
    <ligand>
        <name>Mg(2+)</name>
        <dbReference type="ChEBI" id="CHEBI:18420"/>
    </ligand>
</feature>
<feature type="binding site" evidence="4">
    <location>
        <begin position="94"/>
        <end position="98"/>
    </location>
    <ligand>
        <name>GTP</name>
        <dbReference type="ChEBI" id="CHEBI:37565"/>
    </ligand>
</feature>
<feature type="binding site" evidence="4">
    <location>
        <position position="96"/>
    </location>
    <ligand>
        <name>Mg(2+)</name>
        <dbReference type="ChEBI" id="CHEBI:18420"/>
    </ligand>
</feature>
<feature type="binding site" evidence="4">
    <location>
        <begin position="115"/>
        <end position="118"/>
    </location>
    <ligand>
        <name>GTP</name>
        <dbReference type="ChEBI" id="CHEBI:37565"/>
    </ligand>
</feature>
<feature type="binding site" evidence="4">
    <location>
        <begin position="246"/>
        <end position="249"/>
    </location>
    <ligand>
        <name>GTP</name>
        <dbReference type="ChEBI" id="CHEBI:37565"/>
    </ligand>
</feature>
<feature type="binding site" evidence="4">
    <location>
        <begin position="269"/>
        <end position="271"/>
    </location>
    <ligand>
        <name>GTP</name>
        <dbReference type="ChEBI" id="CHEBI:37565"/>
    </ligand>
</feature>
<feature type="modified residue" description="(3S)-3-hydroxylysine" evidence="2">
    <location>
        <position position="21"/>
    </location>
</feature>
<dbReference type="EC" id="3.6.5.-"/>
<dbReference type="EMBL" id="BT021741">
    <property type="protein sequence ID" value="AAX46588.1"/>
    <property type="molecule type" value="mRNA"/>
</dbReference>
<dbReference type="RefSeq" id="NP_001014865.1">
    <property type="nucleotide sequence ID" value="NM_001014865.1"/>
</dbReference>
<dbReference type="SMR" id="Q58D56"/>
<dbReference type="FunCoup" id="Q58D56">
    <property type="interactions" value="5306"/>
</dbReference>
<dbReference type="STRING" id="9913.ENSBTAP00000008544"/>
<dbReference type="PaxDb" id="9913-ENSBTAP00000008544"/>
<dbReference type="GeneID" id="507472"/>
<dbReference type="KEGG" id="bta:507472"/>
<dbReference type="CTD" id="1819"/>
<dbReference type="VEuPathDB" id="HostDB:ENSBTAG00000006517"/>
<dbReference type="eggNOG" id="KOG1486">
    <property type="taxonomic scope" value="Eukaryota"/>
</dbReference>
<dbReference type="HOGENOM" id="CLU_044997_0_0_1"/>
<dbReference type="InParanoid" id="Q58D56"/>
<dbReference type="OMA" id="DVCDQVH"/>
<dbReference type="OrthoDB" id="1708588at2759"/>
<dbReference type="TreeFam" id="TF105706"/>
<dbReference type="Reactome" id="R-BTA-9629569">
    <property type="pathway name" value="Protein hydroxylation"/>
</dbReference>
<dbReference type="Proteomes" id="UP000009136">
    <property type="component" value="Chromosome 19"/>
</dbReference>
<dbReference type="Bgee" id="ENSBTAG00000006517">
    <property type="expression patterns" value="Expressed in laryngeal cartilage and 105 other cell types or tissues"/>
</dbReference>
<dbReference type="GO" id="GO:0005737">
    <property type="term" value="C:cytoplasm"/>
    <property type="evidence" value="ECO:0000318"/>
    <property type="project" value="GO_Central"/>
</dbReference>
<dbReference type="GO" id="GO:0005634">
    <property type="term" value="C:nucleus"/>
    <property type="evidence" value="ECO:0007669"/>
    <property type="project" value="UniProtKB-SubCell"/>
</dbReference>
<dbReference type="GO" id="GO:0005525">
    <property type="term" value="F:GTP binding"/>
    <property type="evidence" value="ECO:0000318"/>
    <property type="project" value="GO_Central"/>
</dbReference>
<dbReference type="GO" id="GO:0003924">
    <property type="term" value="F:GTPase activity"/>
    <property type="evidence" value="ECO:0007669"/>
    <property type="project" value="InterPro"/>
</dbReference>
<dbReference type="GO" id="GO:0046872">
    <property type="term" value="F:metal ion binding"/>
    <property type="evidence" value="ECO:0007669"/>
    <property type="project" value="UniProtKB-KW"/>
</dbReference>
<dbReference type="GO" id="GO:0002181">
    <property type="term" value="P:cytoplasmic translation"/>
    <property type="evidence" value="ECO:0000318"/>
    <property type="project" value="GO_Central"/>
</dbReference>
<dbReference type="CDD" id="cd01896">
    <property type="entry name" value="DRG"/>
    <property type="match status" value="1"/>
</dbReference>
<dbReference type="CDD" id="cd17231">
    <property type="entry name" value="TGS_DRG2"/>
    <property type="match status" value="1"/>
</dbReference>
<dbReference type="FunFam" id="3.10.20.30:FF:000016">
    <property type="entry name" value="Developmentally-regulated GTP-binding protein 2"/>
    <property type="match status" value="1"/>
</dbReference>
<dbReference type="FunFam" id="3.40.50.300:FF:000740">
    <property type="entry name" value="Putative GTP-binding protein 1"/>
    <property type="match status" value="1"/>
</dbReference>
<dbReference type="Gene3D" id="3.10.20.30">
    <property type="match status" value="1"/>
</dbReference>
<dbReference type="Gene3D" id="6.10.140.1070">
    <property type="match status" value="2"/>
</dbReference>
<dbReference type="InterPro" id="IPR012675">
    <property type="entry name" value="Beta-grasp_dom_sf"/>
</dbReference>
<dbReference type="InterPro" id="IPR045001">
    <property type="entry name" value="DRG"/>
</dbReference>
<dbReference type="InterPro" id="IPR031167">
    <property type="entry name" value="G_OBG"/>
</dbReference>
<dbReference type="InterPro" id="IPR006073">
    <property type="entry name" value="GTP-bd"/>
</dbReference>
<dbReference type="InterPro" id="IPR031662">
    <property type="entry name" value="GTP-binding_2"/>
</dbReference>
<dbReference type="InterPro" id="IPR006074">
    <property type="entry name" value="GTP1-OBG_CS"/>
</dbReference>
<dbReference type="InterPro" id="IPR027417">
    <property type="entry name" value="P-loop_NTPase"/>
</dbReference>
<dbReference type="InterPro" id="IPR005225">
    <property type="entry name" value="Small_GTP-bd"/>
</dbReference>
<dbReference type="InterPro" id="IPR004095">
    <property type="entry name" value="TGS"/>
</dbReference>
<dbReference type="InterPro" id="IPR012676">
    <property type="entry name" value="TGS-like"/>
</dbReference>
<dbReference type="NCBIfam" id="TIGR00231">
    <property type="entry name" value="small_GTP"/>
    <property type="match status" value="1"/>
</dbReference>
<dbReference type="PANTHER" id="PTHR43127">
    <property type="entry name" value="DEVELOPMENTALLY-REGULATED GTP-BINDING PROTEIN 2"/>
    <property type="match status" value="1"/>
</dbReference>
<dbReference type="Pfam" id="PF01926">
    <property type="entry name" value="MMR_HSR1"/>
    <property type="match status" value="1"/>
</dbReference>
<dbReference type="Pfam" id="PF16897">
    <property type="entry name" value="MMR_HSR1_Xtn"/>
    <property type="match status" value="1"/>
</dbReference>
<dbReference type="Pfam" id="PF02824">
    <property type="entry name" value="TGS"/>
    <property type="match status" value="1"/>
</dbReference>
<dbReference type="PRINTS" id="PR00326">
    <property type="entry name" value="GTP1OBG"/>
</dbReference>
<dbReference type="SUPFAM" id="SSF52540">
    <property type="entry name" value="P-loop containing nucleoside triphosphate hydrolases"/>
    <property type="match status" value="1"/>
</dbReference>
<dbReference type="SUPFAM" id="SSF81271">
    <property type="entry name" value="TGS-like"/>
    <property type="match status" value="1"/>
</dbReference>
<dbReference type="PROSITE" id="PS51710">
    <property type="entry name" value="G_OBG"/>
    <property type="match status" value="1"/>
</dbReference>
<dbReference type="PROSITE" id="PS00905">
    <property type="entry name" value="GTP1_OBG"/>
    <property type="match status" value="1"/>
</dbReference>
<dbReference type="PROSITE" id="PS51880">
    <property type="entry name" value="TGS"/>
    <property type="match status" value="1"/>
</dbReference>
<reference key="1">
    <citation type="journal article" date="2005" name="BMC Genomics">
        <title>Characterization of 954 bovine full-CDS cDNA sequences.</title>
        <authorList>
            <person name="Harhay G.P."/>
            <person name="Sonstegard T.S."/>
            <person name="Keele J.W."/>
            <person name="Heaton M.P."/>
            <person name="Clawson M.L."/>
            <person name="Snelling W.M."/>
            <person name="Wiedmann R.T."/>
            <person name="Van Tassell C.P."/>
            <person name="Smith T.P.L."/>
        </authorList>
    </citation>
    <scope>NUCLEOTIDE SEQUENCE [LARGE SCALE MRNA]</scope>
</reference>
<name>DRG2_BOVIN</name>
<sequence length="364" mass="40749">MGILEKISEIEKEIARTQKNKATEYHLGLLKAKLAKYRAQLLEPSKSSSSKGEGFDVMKSGDARVALIGFPSVGKSTFLSLMTSTASEAASYEFTTLTCIPGVIEYKGANIQLLDLPGIIEGAAQGKGRGRQVIAVARTADVVIMMLDATKGEVQRSLLEKELESVGIRLNKHKPNIYFKPKKGGGISFNSTVTLTQCSEKLVQLILHEYKIFNAEVLFREDCSPDEFIDVIVGNRVYMPCLYVYNKIDQISMEEVDRLARKPDSVVISCGMKLNLDYLLEMLWEYLALTCIYTKKRGQRPDFTDAIILRKGASVEHVCHRIHRSLASQFKYALVWGTSTKYSPQRVGLTHTMEHEDVIQIVKK</sequence>
<proteinExistence type="evidence at transcript level"/>